<organism>
    <name type="scientific">Shigella sonnei (strain Ss046)</name>
    <dbReference type="NCBI Taxonomy" id="300269"/>
    <lineage>
        <taxon>Bacteria</taxon>
        <taxon>Pseudomonadati</taxon>
        <taxon>Pseudomonadota</taxon>
        <taxon>Gammaproteobacteria</taxon>
        <taxon>Enterobacterales</taxon>
        <taxon>Enterobacteriaceae</taxon>
        <taxon>Shigella</taxon>
    </lineage>
</organism>
<proteinExistence type="inferred from homology"/>
<gene>
    <name evidence="1" type="primary">mtnN</name>
    <name type="ordered locus">SSON_0171</name>
</gene>
<sequence length="232" mass="24354">MKIGIIGAMEEEVTLLRDKIENRQTISLGGCEIYTGQLNGTEVALLKSGIGKVAAALGATLLLEHCKPDVIINTGSAGGLAPTLKVGDIVVSDEARYHDADVTAFGYEYGQLPGCPAGFKADDKLIAAAEACIAELNLNAVRGLIVSGDAFINGSVGLAKIRHNFPQAIAVEMEATAIAHVCHNFNVPFVVVRAISDVADQQSHLSFDEFLAVAAKQSSLMVESLVQKLAHG</sequence>
<name>MTNN_SHISS</name>
<keyword id="KW-0028">Amino-acid biosynthesis</keyword>
<keyword id="KW-0378">Hydrolase</keyword>
<keyword id="KW-0486">Methionine biosynthesis</keyword>
<keyword id="KW-1185">Reference proteome</keyword>
<protein>
    <recommendedName>
        <fullName evidence="1">5'-methylthioadenosine/S-adenosylhomocysteine nucleosidase</fullName>
        <shortName evidence="1">MTA/SAH nucleosidase</shortName>
        <shortName evidence="1">MTAN</shortName>
        <ecNumber evidence="1">3.2.2.9</ecNumber>
    </recommendedName>
    <alternativeName>
        <fullName evidence="1">5'-deoxyadenosine nucleosidase</fullName>
        <shortName evidence="1">DOA nucleosidase</shortName>
        <shortName evidence="1">dAdo nucleosidase</shortName>
    </alternativeName>
    <alternativeName>
        <fullName evidence="1">5'-methylthioadenosine nucleosidase</fullName>
        <shortName evidence="1">MTA nucleosidase</shortName>
    </alternativeName>
    <alternativeName>
        <fullName evidence="1">S-adenosylhomocysteine nucleosidase</fullName>
        <shortName evidence="1">AdoHcy nucleosidase</shortName>
        <shortName evidence="1">SAH nucleosidase</shortName>
        <shortName evidence="1">SRH nucleosidase</shortName>
    </alternativeName>
</protein>
<feature type="chain" id="PRO_0000359360" description="5'-methylthioadenosine/S-adenosylhomocysteine nucleosidase">
    <location>
        <begin position="1"/>
        <end position="232"/>
    </location>
</feature>
<feature type="active site" description="Proton acceptor" evidence="1">
    <location>
        <position position="12"/>
    </location>
</feature>
<feature type="active site" description="Proton donor" evidence="1">
    <location>
        <position position="197"/>
    </location>
</feature>
<feature type="binding site" evidence="1">
    <location>
        <position position="78"/>
    </location>
    <ligand>
        <name>substrate</name>
    </ligand>
</feature>
<feature type="binding site" evidence="1">
    <location>
        <position position="152"/>
    </location>
    <ligand>
        <name>substrate</name>
    </ligand>
</feature>
<feature type="binding site" evidence="1">
    <location>
        <begin position="173"/>
        <end position="174"/>
    </location>
    <ligand>
        <name>substrate</name>
    </ligand>
</feature>
<reference key="1">
    <citation type="journal article" date="2005" name="Nucleic Acids Res.">
        <title>Genome dynamics and diversity of Shigella species, the etiologic agents of bacillary dysentery.</title>
        <authorList>
            <person name="Yang F."/>
            <person name="Yang J."/>
            <person name="Zhang X."/>
            <person name="Chen L."/>
            <person name="Jiang Y."/>
            <person name="Yan Y."/>
            <person name="Tang X."/>
            <person name="Wang J."/>
            <person name="Xiong Z."/>
            <person name="Dong J."/>
            <person name="Xue Y."/>
            <person name="Zhu Y."/>
            <person name="Xu X."/>
            <person name="Sun L."/>
            <person name="Chen S."/>
            <person name="Nie H."/>
            <person name="Peng J."/>
            <person name="Xu J."/>
            <person name="Wang Y."/>
            <person name="Yuan Z."/>
            <person name="Wen Y."/>
            <person name="Yao Z."/>
            <person name="Shen Y."/>
            <person name="Qiang B."/>
            <person name="Hou Y."/>
            <person name="Yu J."/>
            <person name="Jin Q."/>
        </authorList>
    </citation>
    <scope>NUCLEOTIDE SEQUENCE [LARGE SCALE GENOMIC DNA]</scope>
    <source>
        <strain>Ss046</strain>
    </source>
</reference>
<accession>Q3Z5J8</accession>
<dbReference type="EC" id="3.2.2.9" evidence="1"/>
<dbReference type="EMBL" id="CP000038">
    <property type="protein sequence ID" value="AAZ86964.1"/>
    <property type="molecule type" value="Genomic_DNA"/>
</dbReference>
<dbReference type="RefSeq" id="WP_000689844.1">
    <property type="nucleotide sequence ID" value="NC_007384.1"/>
</dbReference>
<dbReference type="SMR" id="Q3Z5J8"/>
<dbReference type="GeneID" id="93777267"/>
<dbReference type="KEGG" id="ssn:SSON_0171"/>
<dbReference type="HOGENOM" id="CLU_031248_2_2_6"/>
<dbReference type="UniPathway" id="UPA00904">
    <property type="reaction ID" value="UER00871"/>
</dbReference>
<dbReference type="Proteomes" id="UP000002529">
    <property type="component" value="Chromosome"/>
</dbReference>
<dbReference type="GO" id="GO:0005829">
    <property type="term" value="C:cytosol"/>
    <property type="evidence" value="ECO:0007669"/>
    <property type="project" value="TreeGrafter"/>
</dbReference>
<dbReference type="GO" id="GO:0008782">
    <property type="term" value="F:adenosylhomocysteine nucleosidase activity"/>
    <property type="evidence" value="ECO:0007669"/>
    <property type="project" value="UniProtKB-UniRule"/>
</dbReference>
<dbReference type="GO" id="GO:0008930">
    <property type="term" value="F:methylthioadenosine nucleosidase activity"/>
    <property type="evidence" value="ECO:0007669"/>
    <property type="project" value="UniProtKB-UniRule"/>
</dbReference>
<dbReference type="GO" id="GO:0019509">
    <property type="term" value="P:L-methionine salvage from methylthioadenosine"/>
    <property type="evidence" value="ECO:0007669"/>
    <property type="project" value="UniProtKB-UniRule"/>
</dbReference>
<dbReference type="GO" id="GO:0019284">
    <property type="term" value="P:L-methionine salvage from S-adenosylmethionine"/>
    <property type="evidence" value="ECO:0007669"/>
    <property type="project" value="TreeGrafter"/>
</dbReference>
<dbReference type="GO" id="GO:0046124">
    <property type="term" value="P:purine deoxyribonucleoside catabolic process"/>
    <property type="evidence" value="ECO:0007669"/>
    <property type="project" value="UniProtKB-UniRule"/>
</dbReference>
<dbReference type="CDD" id="cd09008">
    <property type="entry name" value="MTAN"/>
    <property type="match status" value="1"/>
</dbReference>
<dbReference type="FunFam" id="3.40.50.1580:FF:000001">
    <property type="entry name" value="MTA/SAH nucleosidase family protein"/>
    <property type="match status" value="1"/>
</dbReference>
<dbReference type="Gene3D" id="3.40.50.1580">
    <property type="entry name" value="Nucleoside phosphorylase domain"/>
    <property type="match status" value="1"/>
</dbReference>
<dbReference type="HAMAP" id="MF_01684">
    <property type="entry name" value="Salvage_MtnN"/>
    <property type="match status" value="1"/>
</dbReference>
<dbReference type="InterPro" id="IPR010049">
    <property type="entry name" value="MTA_SAH_Nsdase"/>
</dbReference>
<dbReference type="InterPro" id="IPR000845">
    <property type="entry name" value="Nucleoside_phosphorylase_d"/>
</dbReference>
<dbReference type="InterPro" id="IPR035994">
    <property type="entry name" value="Nucleoside_phosphorylase_sf"/>
</dbReference>
<dbReference type="NCBIfam" id="TIGR01704">
    <property type="entry name" value="MTA_SAH-Nsdase"/>
    <property type="match status" value="1"/>
</dbReference>
<dbReference type="NCBIfam" id="NF004079">
    <property type="entry name" value="PRK05584.1"/>
    <property type="match status" value="1"/>
</dbReference>
<dbReference type="PANTHER" id="PTHR46832">
    <property type="entry name" value="5'-METHYLTHIOADENOSINE/S-ADENOSYLHOMOCYSTEINE NUCLEOSIDASE"/>
    <property type="match status" value="1"/>
</dbReference>
<dbReference type="PANTHER" id="PTHR46832:SF1">
    <property type="entry name" value="5'-METHYLTHIOADENOSINE_S-ADENOSYLHOMOCYSTEINE NUCLEOSIDASE"/>
    <property type="match status" value="1"/>
</dbReference>
<dbReference type="Pfam" id="PF01048">
    <property type="entry name" value="PNP_UDP_1"/>
    <property type="match status" value="1"/>
</dbReference>
<dbReference type="SUPFAM" id="SSF53167">
    <property type="entry name" value="Purine and uridine phosphorylases"/>
    <property type="match status" value="1"/>
</dbReference>
<comment type="function">
    <text evidence="1">Catalyzes the irreversible cleavage of the glycosidic bond in both 5'-methylthioadenosine (MTA) and S-adenosylhomocysteine (SAH/AdoHcy) to adenine and the corresponding thioribose, 5'-methylthioribose and S-ribosylhomocysteine, respectively. Also cleaves 5'-deoxyadenosine, a toxic by-product of radical S-adenosylmethionine (SAM) enzymes, into 5-deoxyribose and adenine. Thus, is required for in vivo function of the radical SAM enzymes biotin synthase and lipoic acid synthase, that are inhibited by 5'-deoxyadenosine accumulation.</text>
</comment>
<comment type="catalytic activity">
    <reaction evidence="1">
        <text>S-adenosyl-L-homocysteine + H2O = S-(5-deoxy-D-ribos-5-yl)-L-homocysteine + adenine</text>
        <dbReference type="Rhea" id="RHEA:17805"/>
        <dbReference type="ChEBI" id="CHEBI:15377"/>
        <dbReference type="ChEBI" id="CHEBI:16708"/>
        <dbReference type="ChEBI" id="CHEBI:57856"/>
        <dbReference type="ChEBI" id="CHEBI:58195"/>
        <dbReference type="EC" id="3.2.2.9"/>
    </reaction>
</comment>
<comment type="catalytic activity">
    <reaction evidence="1">
        <text>S-methyl-5'-thioadenosine + H2O = 5-(methylsulfanyl)-D-ribose + adenine</text>
        <dbReference type="Rhea" id="RHEA:13617"/>
        <dbReference type="ChEBI" id="CHEBI:15377"/>
        <dbReference type="ChEBI" id="CHEBI:16708"/>
        <dbReference type="ChEBI" id="CHEBI:17509"/>
        <dbReference type="ChEBI" id="CHEBI:78440"/>
        <dbReference type="EC" id="3.2.2.9"/>
    </reaction>
</comment>
<comment type="catalytic activity">
    <reaction evidence="1">
        <text>5'-deoxyadenosine + H2O = 5-deoxy-D-ribose + adenine</text>
        <dbReference type="Rhea" id="RHEA:29859"/>
        <dbReference type="ChEBI" id="CHEBI:15377"/>
        <dbReference type="ChEBI" id="CHEBI:16708"/>
        <dbReference type="ChEBI" id="CHEBI:17319"/>
        <dbReference type="ChEBI" id="CHEBI:149540"/>
        <dbReference type="EC" id="3.2.2.9"/>
    </reaction>
    <physiologicalReaction direction="left-to-right" evidence="1">
        <dbReference type="Rhea" id="RHEA:29860"/>
    </physiologicalReaction>
</comment>
<comment type="pathway">
    <text evidence="1">Amino-acid biosynthesis; L-methionine biosynthesis via salvage pathway; S-methyl-5-thio-alpha-D-ribose 1-phosphate from S-methyl-5'-thioadenosine (hydrolase route): step 1/2.</text>
</comment>
<comment type="subunit">
    <text evidence="1">Homodimer.</text>
</comment>
<comment type="similarity">
    <text evidence="1">Belongs to the PNP/UDP phosphorylase family. MtnN subfamily.</text>
</comment>
<evidence type="ECO:0000255" key="1">
    <source>
        <dbReference type="HAMAP-Rule" id="MF_01684"/>
    </source>
</evidence>